<keyword id="KW-0162">Chylomicron</keyword>
<keyword id="KW-0967">Endosome</keyword>
<keyword id="KW-0272">Extracellular matrix</keyword>
<keyword id="KW-0325">Glycoprotein</keyword>
<keyword id="KW-0345">HDL</keyword>
<keyword id="KW-0358">Heparin-binding</keyword>
<keyword id="KW-0445">Lipid transport</keyword>
<keyword id="KW-0446">Lipid-binding</keyword>
<keyword id="KW-0558">Oxidation</keyword>
<keyword id="KW-0597">Phosphoprotein</keyword>
<keyword id="KW-1185">Reference proteome</keyword>
<keyword id="KW-0677">Repeat</keyword>
<keyword id="KW-0964">Secreted</keyword>
<keyword id="KW-0732">Signal</keyword>
<keyword id="KW-0813">Transport</keyword>
<keyword id="KW-0850">VLDL</keyword>
<name>APOE_LIPVE</name>
<protein>
    <recommendedName>
        <fullName>Apolipoprotein E</fullName>
        <shortName>Apo-E</shortName>
    </recommendedName>
</protein>
<feature type="signal peptide" evidence="3">
    <location>
        <begin position="1"/>
        <end position="18"/>
    </location>
</feature>
<feature type="chain" id="PRO_0000429976" description="Apolipoprotein E">
    <location>
        <begin position="19"/>
        <end position="316"/>
    </location>
</feature>
<feature type="repeat" description="1">
    <location>
        <begin position="79"/>
        <end position="100"/>
    </location>
</feature>
<feature type="repeat" description="2">
    <location>
        <begin position="101"/>
        <end position="122"/>
    </location>
</feature>
<feature type="repeat" description="3">
    <location>
        <begin position="123"/>
        <end position="144"/>
    </location>
</feature>
<feature type="repeat" description="4">
    <location>
        <begin position="145"/>
        <end position="166"/>
    </location>
</feature>
<feature type="repeat" description="5">
    <location>
        <begin position="167"/>
        <end position="188"/>
    </location>
</feature>
<feature type="repeat" description="6">
    <location>
        <begin position="189"/>
        <end position="210"/>
    </location>
</feature>
<feature type="repeat" description="7">
    <location>
        <begin position="211"/>
        <end position="232"/>
    </location>
</feature>
<feature type="repeat" description="8">
    <location>
        <begin position="233"/>
        <end position="254"/>
    </location>
</feature>
<feature type="region of interest" description="8 X 22 AA approximate tandem repeats">
    <location>
        <begin position="79"/>
        <end position="254"/>
    </location>
</feature>
<feature type="region of interest" description="LDL and other lipoprotein receptors binding" evidence="1">
    <location>
        <begin position="157"/>
        <end position="167"/>
    </location>
</feature>
<feature type="region of interest" description="Lipid-binding and lipoprotein association" evidence="1">
    <location>
        <begin position="209"/>
        <end position="289"/>
    </location>
</feature>
<feature type="region of interest" description="Homooligomerization" evidence="1">
    <location>
        <begin position="265"/>
        <end position="316"/>
    </location>
</feature>
<feature type="region of interest" description="Specificity for association with VLDL" evidence="1">
    <location>
        <begin position="277"/>
        <end position="289"/>
    </location>
</feature>
<feature type="binding site" evidence="1">
    <location>
        <begin position="161"/>
        <end position="164"/>
    </location>
    <ligand>
        <name>heparin</name>
        <dbReference type="ChEBI" id="CHEBI:28304"/>
    </ligand>
</feature>
<feature type="binding site" evidence="1">
    <location>
        <begin position="228"/>
        <end position="235"/>
    </location>
    <ligand>
        <name>heparin</name>
        <dbReference type="ChEBI" id="CHEBI:28304"/>
    </ligand>
</feature>
<feature type="modified residue" description="Methionine sulfoxide" evidence="2">
    <location>
        <position position="142"/>
    </location>
</feature>
<dbReference type="EMBL" id="AUPI01082701">
    <property type="status" value="NOT_ANNOTATED_CDS"/>
    <property type="molecule type" value="Genomic_DNA"/>
</dbReference>
<dbReference type="RefSeq" id="XP_007458613.1">
    <property type="nucleotide sequence ID" value="XM_007458551.1"/>
</dbReference>
<dbReference type="SMR" id="P0DML8"/>
<dbReference type="FunCoup" id="P0DML8">
    <property type="interactions" value="249"/>
</dbReference>
<dbReference type="STRING" id="118797.P0DML8"/>
<dbReference type="GeneID" id="103081688"/>
<dbReference type="KEGG" id="lve:103081688"/>
<dbReference type="CTD" id="348"/>
<dbReference type="InParanoid" id="P0DML8"/>
<dbReference type="OrthoDB" id="12014at9721"/>
<dbReference type="Proteomes" id="UP000265300">
    <property type="component" value="Unplaced"/>
</dbReference>
<dbReference type="GO" id="GO:0042627">
    <property type="term" value="C:chylomicron"/>
    <property type="evidence" value="ECO:0007669"/>
    <property type="project" value="UniProtKB-KW"/>
</dbReference>
<dbReference type="GO" id="GO:0070062">
    <property type="term" value="C:extracellular exosome"/>
    <property type="evidence" value="ECO:0000250"/>
    <property type="project" value="UniProtKB"/>
</dbReference>
<dbReference type="GO" id="GO:0031012">
    <property type="term" value="C:extracellular matrix"/>
    <property type="evidence" value="ECO:0000250"/>
    <property type="project" value="UniProtKB"/>
</dbReference>
<dbReference type="GO" id="GO:0005615">
    <property type="term" value="C:extracellular space"/>
    <property type="evidence" value="ECO:0000250"/>
    <property type="project" value="UniProtKB"/>
</dbReference>
<dbReference type="GO" id="GO:0034364">
    <property type="term" value="C:high-density lipoprotein particle"/>
    <property type="evidence" value="ECO:0000250"/>
    <property type="project" value="UniProtKB"/>
</dbReference>
<dbReference type="GO" id="GO:0034363">
    <property type="term" value="C:intermediate-density lipoprotein particle"/>
    <property type="evidence" value="ECO:0000250"/>
    <property type="project" value="UniProtKB"/>
</dbReference>
<dbReference type="GO" id="GO:0034362">
    <property type="term" value="C:low-density lipoprotein particle"/>
    <property type="evidence" value="ECO:0000250"/>
    <property type="project" value="UniProtKB"/>
</dbReference>
<dbReference type="GO" id="GO:0097487">
    <property type="term" value="C:multivesicular body, internal vesicle"/>
    <property type="evidence" value="ECO:0000250"/>
    <property type="project" value="UniProtKB"/>
</dbReference>
<dbReference type="GO" id="GO:0034361">
    <property type="term" value="C:very-low-density lipoprotein particle"/>
    <property type="evidence" value="ECO:0000250"/>
    <property type="project" value="UniProtKB"/>
</dbReference>
<dbReference type="GO" id="GO:0120020">
    <property type="term" value="F:cholesterol transfer activity"/>
    <property type="evidence" value="ECO:0007669"/>
    <property type="project" value="TreeGrafter"/>
</dbReference>
<dbReference type="GO" id="GO:0043395">
    <property type="term" value="F:heparan sulfate proteoglycan binding"/>
    <property type="evidence" value="ECO:0000250"/>
    <property type="project" value="UniProtKB"/>
</dbReference>
<dbReference type="GO" id="GO:0008201">
    <property type="term" value="F:heparin binding"/>
    <property type="evidence" value="ECO:0000250"/>
    <property type="project" value="UniProtKB"/>
</dbReference>
<dbReference type="GO" id="GO:0042802">
    <property type="term" value="F:identical protein binding"/>
    <property type="evidence" value="ECO:0000250"/>
    <property type="project" value="UniProtKB"/>
</dbReference>
<dbReference type="GO" id="GO:0050750">
    <property type="term" value="F:low-density lipoprotein particle receptor binding"/>
    <property type="evidence" value="ECO:0000250"/>
    <property type="project" value="UniProtKB"/>
</dbReference>
<dbReference type="GO" id="GO:0060228">
    <property type="term" value="F:phosphatidylcholine-sterol O-acyltransferase activator activity"/>
    <property type="evidence" value="ECO:0007669"/>
    <property type="project" value="TreeGrafter"/>
</dbReference>
<dbReference type="GO" id="GO:0005543">
    <property type="term" value="F:phospholipid binding"/>
    <property type="evidence" value="ECO:0007669"/>
    <property type="project" value="TreeGrafter"/>
</dbReference>
<dbReference type="GO" id="GO:0055090">
    <property type="term" value="P:acylglycerol homeostasis"/>
    <property type="evidence" value="ECO:0007669"/>
    <property type="project" value="TreeGrafter"/>
</dbReference>
<dbReference type="GO" id="GO:0033344">
    <property type="term" value="P:cholesterol efflux"/>
    <property type="evidence" value="ECO:0000250"/>
    <property type="project" value="UniProtKB"/>
</dbReference>
<dbReference type="GO" id="GO:0008203">
    <property type="term" value="P:cholesterol metabolic process"/>
    <property type="evidence" value="ECO:0007669"/>
    <property type="project" value="TreeGrafter"/>
</dbReference>
<dbReference type="GO" id="GO:0034382">
    <property type="term" value="P:chylomicron remnant clearance"/>
    <property type="evidence" value="ECO:0000250"/>
    <property type="project" value="UniProtKB"/>
</dbReference>
<dbReference type="GO" id="GO:0034380">
    <property type="term" value="P:high-density lipoprotein particle assembly"/>
    <property type="evidence" value="ECO:0000250"/>
    <property type="project" value="UniProtKB"/>
</dbReference>
<dbReference type="GO" id="GO:0071831">
    <property type="term" value="P:intermediate-density lipoprotein particle clearance"/>
    <property type="evidence" value="ECO:0000250"/>
    <property type="project" value="UniProtKB"/>
</dbReference>
<dbReference type="GO" id="GO:0042158">
    <property type="term" value="P:lipoprotein biosynthetic process"/>
    <property type="evidence" value="ECO:0000250"/>
    <property type="project" value="UniProtKB"/>
</dbReference>
<dbReference type="GO" id="GO:0032438">
    <property type="term" value="P:melanosome organization"/>
    <property type="evidence" value="ECO:0000250"/>
    <property type="project" value="UniProtKB"/>
</dbReference>
<dbReference type="GO" id="GO:0033700">
    <property type="term" value="P:phospholipid efflux"/>
    <property type="evidence" value="ECO:0007669"/>
    <property type="project" value="TreeGrafter"/>
</dbReference>
<dbReference type="GO" id="GO:0071830">
    <property type="term" value="P:triglyceride-rich lipoprotein particle clearance"/>
    <property type="evidence" value="ECO:0000250"/>
    <property type="project" value="UniProtKB"/>
</dbReference>
<dbReference type="GO" id="GO:0034447">
    <property type="term" value="P:very-low-density lipoprotein particle clearance"/>
    <property type="evidence" value="ECO:0000250"/>
    <property type="project" value="UniProtKB"/>
</dbReference>
<dbReference type="FunFam" id="1.20.120.20:FF:000002">
    <property type="entry name" value="Apolipoprotein E"/>
    <property type="match status" value="1"/>
</dbReference>
<dbReference type="FunFam" id="1.20.120.20:FF:000003">
    <property type="entry name" value="Apolipoprotein E"/>
    <property type="match status" value="1"/>
</dbReference>
<dbReference type="Gene3D" id="1.20.120.20">
    <property type="entry name" value="Apolipoprotein"/>
    <property type="match status" value="2"/>
</dbReference>
<dbReference type="InterPro" id="IPR000074">
    <property type="entry name" value="ApoA_E"/>
</dbReference>
<dbReference type="InterPro" id="IPR050163">
    <property type="entry name" value="Apolipoprotein_A1/A4/E"/>
</dbReference>
<dbReference type="PANTHER" id="PTHR18976">
    <property type="entry name" value="APOLIPOPROTEIN"/>
    <property type="match status" value="1"/>
</dbReference>
<dbReference type="PANTHER" id="PTHR18976:SF2">
    <property type="entry name" value="APOLIPOPROTEIN E"/>
    <property type="match status" value="1"/>
</dbReference>
<dbReference type="Pfam" id="PF01442">
    <property type="entry name" value="Apolipoprotein"/>
    <property type="match status" value="1"/>
</dbReference>
<dbReference type="SUPFAM" id="SSF58113">
    <property type="entry name" value="Apolipoprotein A-I"/>
    <property type="match status" value="1"/>
</dbReference>
<evidence type="ECO:0000250" key="1">
    <source>
        <dbReference type="UniProtKB" id="P02649"/>
    </source>
</evidence>
<evidence type="ECO:0000250" key="2">
    <source>
        <dbReference type="UniProtKB" id="P08226"/>
    </source>
</evidence>
<evidence type="ECO:0000255" key="3"/>
<evidence type="ECO:0000305" key="4"/>
<accession>P0DML8</accession>
<sequence length="316" mass="36199">MKVLWVALVITLLAGCQAEVEPEPEPEVQLGQEWPGWQDSQPWEQALGRFWDYLRWVQTLSDQVQEELLSTQVIQELTVLMDETMKEVKAYREELEGQLAPIAQETQARVSKELQAAQARLASDMEDVRSRLAQYRSEVQAMMGQTTDELRGRLASHLRKLRKRLLRDAEDLQKRLAVYRAGALEGSERSVSAIRERLGPLVEQGRARAATVGTLASQTLRERAEAWHQKLRGRVEEMGTQARDHLEEMREQLEEVRAKVEEQGSQMRLQAEAFQARLKSWFEPLVEDMQRQWAGLVEKVQLAMATSSTSAPSENH</sequence>
<organism>
    <name type="scientific">Lipotes vexillifer</name>
    <name type="common">Yangtze river dolphin</name>
    <dbReference type="NCBI Taxonomy" id="118797"/>
    <lineage>
        <taxon>Eukaryota</taxon>
        <taxon>Metazoa</taxon>
        <taxon>Chordata</taxon>
        <taxon>Craniata</taxon>
        <taxon>Vertebrata</taxon>
        <taxon>Euteleostomi</taxon>
        <taxon>Mammalia</taxon>
        <taxon>Eutheria</taxon>
        <taxon>Laurasiatheria</taxon>
        <taxon>Artiodactyla</taxon>
        <taxon>Whippomorpha</taxon>
        <taxon>Cetacea</taxon>
        <taxon>Odontoceti</taxon>
        <taxon>Lipotidae</taxon>
        <taxon>Lipotes</taxon>
    </lineage>
</organism>
<proteinExistence type="inferred from homology"/>
<comment type="function">
    <text evidence="1">APOE is an apolipoprotein, a protein associating with lipid particles, that mainly functions in lipoprotein-mediated lipid transport between organs via the plasma and interstitial fluids. APOE is a core component of plasma lipoproteins and is involved in their production, conversion and clearance. Apolipoproteins are amphipathic molecules that interact both with lipids of the lipoprotein particle core and the aqueous environment of the plasma. As such, APOE associates with chylomicrons, chylomicron remnants, very low density lipoproteins (VLDL) and intermediate density lipoproteins (IDL) but shows a preferential binding to high-density lipoproteins (HDL). It also binds a wide range of cellular receptors including the LDL receptor/LDLR and the very low-density lipoprotein receptor/VLDLR that mediate the cellular uptake of the APOE-containing lipoprotein particles. Finally, APOE also has a heparin-binding activity and binds heparan-sulfate proteoglycans on the surface of cells, a property that supports the capture and the receptor-mediated uptake of APOE-containing lipoproteins by cells.</text>
</comment>
<comment type="subunit">
    <text evidence="1">Homotetramer. May interact with ABCA1; functionally associated with ABCA1 in the biogenesis of HDLs. May interact with APP/A4 amyloid-beta peptide; the interaction is extremely stable in vitro but its physiological significance is unclear. May interact with MAPT. May interact with MAP2. In the cerebrospinal fluid, interacts with secreted SORL1. Interacts with PMEL; this allows the loading of PMEL luminal fragment on ILVs to induce fibril nucleation.</text>
</comment>
<comment type="subcellular location">
    <subcellularLocation>
        <location evidence="1">Secreted</location>
    </subcellularLocation>
    <subcellularLocation>
        <location evidence="1">Secreted</location>
        <location evidence="1">Extracellular space</location>
    </subcellularLocation>
    <subcellularLocation>
        <location evidence="1">Secreted</location>
        <location evidence="1">Extracellular space</location>
        <location evidence="1">Extracellular matrix</location>
    </subcellularLocation>
    <subcellularLocation>
        <location evidence="1">Extracellular vesicle</location>
    </subcellularLocation>
    <subcellularLocation>
        <location evidence="1">Endosome</location>
        <location evidence="1">Multivesicular body</location>
    </subcellularLocation>
    <text evidence="1">In the plasma, APOE is associated with chylomicrons, chylomicrons remnants, VLDL, LDL and HDL lipoproteins. Lipid poor oligomeric APOE is associated with the extracellular matrix in a calcium- and heparan-sulfate proteoglycans-dependent manner. Lipidation induces the release from the extracellular matrix. Colocalizes with CD63 and PMEL at exosomes and in intraluminal vesicles within multivesicular endosomes.</text>
</comment>
<comment type="PTM">
    <text evidence="1">APOE exists as multiple glycosylated and sialylated glycoforms within cells and in plasma. The extent of glycosylation and sialylation are tissue and context specific.</text>
</comment>
<comment type="PTM">
    <text evidence="1">Glycated in plasma VLDL.</text>
</comment>
<comment type="PTM">
    <text evidence="1">Phosphorylated by FAM20C in the extracellular medium.</text>
</comment>
<comment type="similarity">
    <text evidence="4">Belongs to the apolipoprotein A1/A4/E family.</text>
</comment>
<gene>
    <name type="primary">APOE</name>
</gene>
<reference key="1">
    <citation type="journal article" date="2013" name="Nat. Commun.">
        <title>Baiji genomes reveal low genetic variability and new insights into secondary aquatic adaptations.</title>
        <authorList>
            <person name="Zhou X."/>
            <person name="Sun F."/>
            <person name="Xu S."/>
            <person name="Fan G."/>
            <person name="Zhu K."/>
            <person name="Liu X."/>
            <person name="Chen Y."/>
            <person name="Shi C."/>
            <person name="Yang Y."/>
            <person name="Huang Z."/>
            <person name="Chen J."/>
            <person name="Hou H."/>
            <person name="Guo X."/>
            <person name="Chen W."/>
            <person name="Chen Y."/>
            <person name="Wang X."/>
            <person name="Lv T."/>
            <person name="Yang D."/>
            <person name="Zhou J."/>
            <person name="Huang B."/>
            <person name="Wang Z."/>
            <person name="Zhao W."/>
            <person name="Tian R."/>
            <person name="Xiong Z."/>
            <person name="Xu J."/>
            <person name="Liang X."/>
            <person name="Chen B."/>
            <person name="Liu W."/>
            <person name="Wang J."/>
            <person name="Pan S."/>
            <person name="Fang X."/>
            <person name="Li M."/>
            <person name="Wei F."/>
            <person name="Xu X."/>
            <person name="Zhou K."/>
            <person name="Wang J."/>
            <person name="Yang G."/>
        </authorList>
    </citation>
    <scope>NUCLEOTIDE SEQUENCE [LARGE SCALE GENOMIC DNA]</scope>
</reference>
<reference key="2">
    <citation type="unpublished observations" date="2014-06">
        <authorList>
            <person name="Puppione D.L."/>
        </authorList>
    </citation>
    <scope>IDENTIFICATION</scope>
</reference>